<gene>
    <name type="primary">folB</name>
    <name type="ordered locus">CT_614</name>
</gene>
<dbReference type="EC" id="4.1.2.25"/>
<dbReference type="EMBL" id="AE001273">
    <property type="protein sequence ID" value="AAC68217.1"/>
    <property type="molecule type" value="Genomic_DNA"/>
</dbReference>
<dbReference type="PIR" id="B71494">
    <property type="entry name" value="B71494"/>
</dbReference>
<dbReference type="RefSeq" id="WP_009871982.1">
    <property type="nucleotide sequence ID" value="NC_000117.1"/>
</dbReference>
<dbReference type="SMR" id="O84620"/>
<dbReference type="FunCoup" id="O84620">
    <property type="interactions" value="103"/>
</dbReference>
<dbReference type="STRING" id="272561.CT_614"/>
<dbReference type="EnsemblBacteria" id="AAC68217">
    <property type="protein sequence ID" value="AAC68217"/>
    <property type="gene ID" value="CT_614"/>
</dbReference>
<dbReference type="KEGG" id="ctr:CT_614"/>
<dbReference type="PATRIC" id="fig|272561.5.peg.671"/>
<dbReference type="HOGENOM" id="CLU_112632_3_0_0"/>
<dbReference type="InParanoid" id="O84620"/>
<dbReference type="OrthoDB" id="7161206at2"/>
<dbReference type="BioCyc" id="MetaCyc:MONOMER-18793"/>
<dbReference type="UniPathway" id="UPA00077">
    <property type="reaction ID" value="UER00154"/>
</dbReference>
<dbReference type="Proteomes" id="UP000000431">
    <property type="component" value="Chromosome"/>
</dbReference>
<dbReference type="GO" id="GO:0005737">
    <property type="term" value="C:cytoplasm"/>
    <property type="evidence" value="ECO:0000318"/>
    <property type="project" value="GO_Central"/>
</dbReference>
<dbReference type="GO" id="GO:0004150">
    <property type="term" value="F:dihydroneopterin aldolase activity"/>
    <property type="evidence" value="ECO:0000318"/>
    <property type="project" value="GO_Central"/>
</dbReference>
<dbReference type="GO" id="GO:0046656">
    <property type="term" value="P:folic acid biosynthetic process"/>
    <property type="evidence" value="ECO:0007669"/>
    <property type="project" value="UniProtKB-KW"/>
</dbReference>
<dbReference type="GO" id="GO:0046654">
    <property type="term" value="P:tetrahydrofolate biosynthetic process"/>
    <property type="evidence" value="ECO:0007669"/>
    <property type="project" value="UniProtKB-UniPathway"/>
</dbReference>
<dbReference type="CDD" id="cd00534">
    <property type="entry name" value="DHNA_DHNTPE"/>
    <property type="match status" value="1"/>
</dbReference>
<dbReference type="Gene3D" id="3.30.1130.10">
    <property type="match status" value="1"/>
</dbReference>
<dbReference type="InterPro" id="IPR006156">
    <property type="entry name" value="Dihydroneopterin_aldolase"/>
</dbReference>
<dbReference type="InterPro" id="IPR006157">
    <property type="entry name" value="FolB_dom"/>
</dbReference>
<dbReference type="InterPro" id="IPR043133">
    <property type="entry name" value="GTP-CH-I_C/QueF"/>
</dbReference>
<dbReference type="NCBIfam" id="TIGR00525">
    <property type="entry name" value="folB"/>
    <property type="match status" value="1"/>
</dbReference>
<dbReference type="NCBIfam" id="TIGR00526">
    <property type="entry name" value="folB_dom"/>
    <property type="match status" value="1"/>
</dbReference>
<dbReference type="PANTHER" id="PTHR42844">
    <property type="entry name" value="DIHYDRONEOPTERIN ALDOLASE 1-RELATED"/>
    <property type="match status" value="1"/>
</dbReference>
<dbReference type="PANTHER" id="PTHR42844:SF1">
    <property type="entry name" value="DIHYDRONEOPTERIN ALDOLASE 1-RELATED"/>
    <property type="match status" value="1"/>
</dbReference>
<dbReference type="Pfam" id="PF02152">
    <property type="entry name" value="FolB"/>
    <property type="match status" value="1"/>
</dbReference>
<dbReference type="SMART" id="SM00905">
    <property type="entry name" value="FolB"/>
    <property type="match status" value="1"/>
</dbReference>
<dbReference type="SUPFAM" id="SSF55620">
    <property type="entry name" value="Tetrahydrobiopterin biosynthesis enzymes-like"/>
    <property type="match status" value="1"/>
</dbReference>
<name>FOLB_CHLTR</name>
<keyword id="KW-0289">Folate biosynthesis</keyword>
<keyword id="KW-0456">Lyase</keyword>
<keyword id="KW-1185">Reference proteome</keyword>
<comment type="function">
    <text evidence="1">Catalyzes the conversion of 7,8-dihydroneopterin to 6-hydroxymethyl-7,8-dihydropterin.</text>
</comment>
<comment type="catalytic activity">
    <reaction>
        <text>7,8-dihydroneopterin = 6-hydroxymethyl-7,8-dihydropterin + glycolaldehyde</text>
        <dbReference type="Rhea" id="RHEA:10540"/>
        <dbReference type="ChEBI" id="CHEBI:17001"/>
        <dbReference type="ChEBI" id="CHEBI:17071"/>
        <dbReference type="ChEBI" id="CHEBI:44841"/>
        <dbReference type="EC" id="4.1.2.25"/>
    </reaction>
</comment>
<comment type="pathway">
    <text>Cofactor biosynthesis; tetrahydrofolate biosynthesis; 2-amino-4-hydroxy-6-hydroxymethyl-7,8-dihydropteridine diphosphate from 7,8-dihydroneopterin triphosphate: step 3/4.</text>
</comment>
<comment type="similarity">
    <text evidence="3">Belongs to the DHNA family.</text>
</comment>
<accession>O84620</accession>
<evidence type="ECO:0000250" key="1"/>
<evidence type="ECO:0000250" key="2">
    <source>
        <dbReference type="UniProtKB" id="P0AC16"/>
    </source>
</evidence>
<evidence type="ECO:0000305" key="3"/>
<proteinExistence type="inferred from homology"/>
<reference key="1">
    <citation type="journal article" date="1998" name="Science">
        <title>Genome sequence of an obligate intracellular pathogen of humans: Chlamydia trachomatis.</title>
        <authorList>
            <person name="Stephens R.S."/>
            <person name="Kalman S."/>
            <person name="Lammel C.J."/>
            <person name="Fan J."/>
            <person name="Marathe R."/>
            <person name="Aravind L."/>
            <person name="Mitchell W.P."/>
            <person name="Olinger L."/>
            <person name="Tatusov R.L."/>
            <person name="Zhao Q."/>
            <person name="Koonin E.V."/>
            <person name="Davis R.W."/>
        </authorList>
    </citation>
    <scope>NUCLEOTIDE SEQUENCE [LARGE SCALE GENOMIC DNA]</scope>
    <source>
        <strain>ATCC VR-885 / DSM 19411 / UW-3/Cx</strain>
    </source>
</reference>
<protein>
    <recommendedName>
        <fullName>Probable dihydroneopterin aldolase</fullName>
        <shortName>DHNA</shortName>
        <ecNumber>4.1.2.25</ecNumber>
    </recommendedName>
    <alternativeName>
        <fullName>7,8-dihydroneopterin aldolase</fullName>
    </alternativeName>
</protein>
<sequence length="124" mass="13941">MLLYRLDIADFRVWVSIGVSEQERHYPQPVLVSLSLFFKEEPKACSTDKVSDSVCYAELVSLIEEVATNNPCALIERLAKVLLEKIEKALAGQVSRIDLRVSKERPPIPDLLSPVSFSISREVP</sequence>
<organism>
    <name type="scientific">Chlamydia trachomatis serovar D (strain ATCC VR-885 / DSM 19411 / UW-3/Cx)</name>
    <dbReference type="NCBI Taxonomy" id="272561"/>
    <lineage>
        <taxon>Bacteria</taxon>
        <taxon>Pseudomonadati</taxon>
        <taxon>Chlamydiota</taxon>
        <taxon>Chlamydiia</taxon>
        <taxon>Chlamydiales</taxon>
        <taxon>Chlamydiaceae</taxon>
        <taxon>Chlamydia/Chlamydophila group</taxon>
        <taxon>Chlamydia</taxon>
    </lineage>
</organism>
<feature type="chain" id="PRO_0000168268" description="Probable dihydroneopterin aldolase">
    <location>
        <begin position="1"/>
        <end position="124"/>
    </location>
</feature>
<feature type="active site" description="Proton donor/acceptor" evidence="2">
    <location>
        <position position="103"/>
    </location>
</feature>
<feature type="binding site" evidence="2">
    <location>
        <position position="23"/>
    </location>
    <ligand>
        <name>substrate</name>
    </ligand>
</feature>
<feature type="binding site" evidence="2">
    <location>
        <position position="56"/>
    </location>
    <ligand>
        <name>substrate</name>
    </ligand>
</feature>
<feature type="binding site" evidence="2">
    <location>
        <begin position="75"/>
        <end position="76"/>
    </location>
    <ligand>
        <name>substrate</name>
    </ligand>
</feature>